<keyword id="KW-0004">4Fe-4S</keyword>
<keyword id="KW-0963">Cytoplasm</keyword>
<keyword id="KW-0408">Iron</keyword>
<keyword id="KW-0411">Iron-sulfur</keyword>
<keyword id="KW-0479">Metal-binding</keyword>
<keyword id="KW-1185">Reference proteome</keyword>
<keyword id="KW-0949">S-adenosyl-L-methionine</keyword>
<keyword id="KW-0808">Transferase</keyword>
<reference key="1">
    <citation type="journal article" date="2004" name="Nucleic Acids Res.">
        <title>Thermoadaptation trait revealed by the genome sequence of thermophilic Geobacillus kaustophilus.</title>
        <authorList>
            <person name="Takami H."/>
            <person name="Takaki Y."/>
            <person name="Chee G.-J."/>
            <person name="Nishi S."/>
            <person name="Shimamura S."/>
            <person name="Suzuki H."/>
            <person name="Matsui S."/>
            <person name="Uchiyama I."/>
        </authorList>
    </citation>
    <scope>NUCLEOTIDE SEQUENCE [LARGE SCALE GENOMIC DNA]</scope>
    <source>
        <strain>HTA426</strain>
    </source>
</reference>
<comment type="function">
    <text evidence="1">Catalyzes the radical-mediated insertion of two sulfur atoms into the C-6 and C-8 positions of the octanoyl moiety bound to the lipoyl domains of lipoate-dependent enzymes, thereby converting the octanoylated domains into lipoylated derivatives.</text>
</comment>
<comment type="catalytic activity">
    <reaction evidence="1">
        <text>[[Fe-S] cluster scaffold protein carrying a second [4Fe-4S](2+) cluster] + N(6)-octanoyl-L-lysyl-[protein] + 2 oxidized [2Fe-2S]-[ferredoxin] + 2 S-adenosyl-L-methionine + 4 H(+) = [[Fe-S] cluster scaffold protein] + N(6)-[(R)-dihydrolipoyl]-L-lysyl-[protein] + 4 Fe(3+) + 2 hydrogen sulfide + 2 5'-deoxyadenosine + 2 L-methionine + 2 reduced [2Fe-2S]-[ferredoxin]</text>
        <dbReference type="Rhea" id="RHEA:16585"/>
        <dbReference type="Rhea" id="RHEA-COMP:9928"/>
        <dbReference type="Rhea" id="RHEA-COMP:10000"/>
        <dbReference type="Rhea" id="RHEA-COMP:10001"/>
        <dbReference type="Rhea" id="RHEA-COMP:10475"/>
        <dbReference type="Rhea" id="RHEA-COMP:14568"/>
        <dbReference type="Rhea" id="RHEA-COMP:14569"/>
        <dbReference type="ChEBI" id="CHEBI:15378"/>
        <dbReference type="ChEBI" id="CHEBI:17319"/>
        <dbReference type="ChEBI" id="CHEBI:29034"/>
        <dbReference type="ChEBI" id="CHEBI:29919"/>
        <dbReference type="ChEBI" id="CHEBI:33722"/>
        <dbReference type="ChEBI" id="CHEBI:33737"/>
        <dbReference type="ChEBI" id="CHEBI:33738"/>
        <dbReference type="ChEBI" id="CHEBI:57844"/>
        <dbReference type="ChEBI" id="CHEBI:59789"/>
        <dbReference type="ChEBI" id="CHEBI:78809"/>
        <dbReference type="ChEBI" id="CHEBI:83100"/>
        <dbReference type="EC" id="2.8.1.8"/>
    </reaction>
</comment>
<comment type="cofactor">
    <cofactor evidence="1">
        <name>[4Fe-4S] cluster</name>
        <dbReference type="ChEBI" id="CHEBI:49883"/>
    </cofactor>
    <text evidence="1">Binds 2 [4Fe-4S] clusters per subunit. One cluster is coordinated with 3 cysteines and an exchangeable S-adenosyl-L-methionine.</text>
</comment>
<comment type="pathway">
    <text evidence="1">Protein modification; protein lipoylation via endogenous pathway; protein N(6)-(lipoyl)lysine from octanoyl-[acyl-carrier-protein].</text>
</comment>
<comment type="subcellular location">
    <subcellularLocation>
        <location evidence="1">Cytoplasm</location>
    </subcellularLocation>
</comment>
<comment type="similarity">
    <text evidence="1">Belongs to the radical SAM superfamily. Lipoyl synthase family.</text>
</comment>
<comment type="sequence caution" evidence="3">
    <conflict type="erroneous initiation">
        <sequence resource="EMBL-CDS" id="BAD77259"/>
    </conflict>
</comment>
<feature type="chain" id="PRO_0000325257" description="Lipoyl synthase">
    <location>
        <begin position="1"/>
        <end position="298"/>
    </location>
</feature>
<feature type="domain" description="Radical SAM core" evidence="2">
    <location>
        <begin position="53"/>
        <end position="269"/>
    </location>
</feature>
<feature type="binding site" evidence="1">
    <location>
        <position position="40"/>
    </location>
    <ligand>
        <name>[4Fe-4S] cluster</name>
        <dbReference type="ChEBI" id="CHEBI:49883"/>
        <label>1</label>
    </ligand>
</feature>
<feature type="binding site" evidence="1">
    <location>
        <position position="45"/>
    </location>
    <ligand>
        <name>[4Fe-4S] cluster</name>
        <dbReference type="ChEBI" id="CHEBI:49883"/>
        <label>1</label>
    </ligand>
</feature>
<feature type="binding site" evidence="1">
    <location>
        <position position="51"/>
    </location>
    <ligand>
        <name>[4Fe-4S] cluster</name>
        <dbReference type="ChEBI" id="CHEBI:49883"/>
        <label>1</label>
    </ligand>
</feature>
<feature type="binding site" evidence="1">
    <location>
        <position position="67"/>
    </location>
    <ligand>
        <name>[4Fe-4S] cluster</name>
        <dbReference type="ChEBI" id="CHEBI:49883"/>
        <label>2</label>
        <note>4Fe-4S-S-AdoMet</note>
    </ligand>
</feature>
<feature type="binding site" evidence="1">
    <location>
        <position position="71"/>
    </location>
    <ligand>
        <name>[4Fe-4S] cluster</name>
        <dbReference type="ChEBI" id="CHEBI:49883"/>
        <label>2</label>
        <note>4Fe-4S-S-AdoMet</note>
    </ligand>
</feature>
<feature type="binding site" evidence="1">
    <location>
        <position position="74"/>
    </location>
    <ligand>
        <name>[4Fe-4S] cluster</name>
        <dbReference type="ChEBI" id="CHEBI:49883"/>
        <label>2</label>
        <note>4Fe-4S-S-AdoMet</note>
    </ligand>
</feature>
<feature type="binding site" evidence="1">
    <location>
        <position position="280"/>
    </location>
    <ligand>
        <name>[4Fe-4S] cluster</name>
        <dbReference type="ChEBI" id="CHEBI:49883"/>
        <label>1</label>
    </ligand>
</feature>
<accession>Q5KVM7</accession>
<organism>
    <name type="scientific">Geobacillus kaustophilus (strain HTA426)</name>
    <dbReference type="NCBI Taxonomy" id="235909"/>
    <lineage>
        <taxon>Bacteria</taxon>
        <taxon>Bacillati</taxon>
        <taxon>Bacillota</taxon>
        <taxon>Bacilli</taxon>
        <taxon>Bacillales</taxon>
        <taxon>Anoxybacillaceae</taxon>
        <taxon>Geobacillus</taxon>
        <taxon>Geobacillus thermoleovorans group</taxon>
    </lineage>
</organism>
<sequence>MATKEEHVRKPDWLKIKLNTNENYIGLKKLMRENRLHTVCEEAKCPNIHECWAVRRTATFMILGSVCTRACRFCAVKTGLPTELDWQEPERVAESVRIMNLKHVVVTAVARDDLKDGGAAVFAETVRAIRRKNPFTTIEVLPSDMGGVYENLKILMDARPDILNHNIETVRRLTPRVRARATYERSLEFLRRAKELQPDIPTKSSIMVGLGETKEEIIEAMDDLRANHVDILTIGQYLQPTKKHLKVVKYYHPDEFQELKEIALSKGFSHCEAGPLVRSSYHADEQVSEAAKARQLKA</sequence>
<protein>
    <recommendedName>
        <fullName evidence="1">Lipoyl synthase</fullName>
        <ecNumber evidence="1">2.8.1.8</ecNumber>
    </recommendedName>
    <alternativeName>
        <fullName evidence="1">Lip-syn</fullName>
        <shortName evidence="1">LS</shortName>
    </alternativeName>
    <alternativeName>
        <fullName evidence="1">Lipoate synthase</fullName>
    </alternativeName>
    <alternativeName>
        <fullName evidence="1">Lipoic acid synthase</fullName>
    </alternativeName>
    <alternativeName>
        <fullName evidence="1">Sulfur insertion protein LipA</fullName>
    </alternativeName>
</protein>
<proteinExistence type="inferred from homology"/>
<gene>
    <name evidence="1" type="primary">lipA</name>
    <name type="ordered locus">GK2974</name>
</gene>
<dbReference type="EC" id="2.8.1.8" evidence="1"/>
<dbReference type="EMBL" id="BA000043">
    <property type="protein sequence ID" value="BAD77259.1"/>
    <property type="status" value="ALT_INIT"/>
    <property type="molecule type" value="Genomic_DNA"/>
</dbReference>
<dbReference type="RefSeq" id="WP_013144325.1">
    <property type="nucleotide sequence ID" value="NC_006510.1"/>
</dbReference>
<dbReference type="SMR" id="Q5KVM7"/>
<dbReference type="STRING" id="235909.GK2974"/>
<dbReference type="GeneID" id="32064856"/>
<dbReference type="KEGG" id="gka:GK2974"/>
<dbReference type="eggNOG" id="COG0320">
    <property type="taxonomic scope" value="Bacteria"/>
</dbReference>
<dbReference type="HOGENOM" id="CLU_033144_2_1_9"/>
<dbReference type="Proteomes" id="UP000001172">
    <property type="component" value="Chromosome"/>
</dbReference>
<dbReference type="GO" id="GO:0005737">
    <property type="term" value="C:cytoplasm"/>
    <property type="evidence" value="ECO:0007669"/>
    <property type="project" value="UniProtKB-SubCell"/>
</dbReference>
<dbReference type="GO" id="GO:0051539">
    <property type="term" value="F:4 iron, 4 sulfur cluster binding"/>
    <property type="evidence" value="ECO:0007669"/>
    <property type="project" value="UniProtKB-UniRule"/>
</dbReference>
<dbReference type="GO" id="GO:0016992">
    <property type="term" value="F:lipoate synthase activity"/>
    <property type="evidence" value="ECO:0007669"/>
    <property type="project" value="UniProtKB-UniRule"/>
</dbReference>
<dbReference type="GO" id="GO:0046872">
    <property type="term" value="F:metal ion binding"/>
    <property type="evidence" value="ECO:0007669"/>
    <property type="project" value="UniProtKB-KW"/>
</dbReference>
<dbReference type="CDD" id="cd01335">
    <property type="entry name" value="Radical_SAM"/>
    <property type="match status" value="1"/>
</dbReference>
<dbReference type="FunFam" id="3.20.20.70:FF:000040">
    <property type="entry name" value="Lipoyl synthase"/>
    <property type="match status" value="1"/>
</dbReference>
<dbReference type="Gene3D" id="3.20.20.70">
    <property type="entry name" value="Aldolase class I"/>
    <property type="match status" value="1"/>
</dbReference>
<dbReference type="HAMAP" id="MF_00206">
    <property type="entry name" value="Lipoyl_synth"/>
    <property type="match status" value="1"/>
</dbReference>
<dbReference type="InterPro" id="IPR013785">
    <property type="entry name" value="Aldolase_TIM"/>
</dbReference>
<dbReference type="InterPro" id="IPR006638">
    <property type="entry name" value="Elp3/MiaA/NifB-like_rSAM"/>
</dbReference>
<dbReference type="InterPro" id="IPR031691">
    <property type="entry name" value="LIAS_N"/>
</dbReference>
<dbReference type="InterPro" id="IPR003698">
    <property type="entry name" value="Lipoyl_synth"/>
</dbReference>
<dbReference type="InterPro" id="IPR007197">
    <property type="entry name" value="rSAM"/>
</dbReference>
<dbReference type="NCBIfam" id="TIGR00510">
    <property type="entry name" value="lipA"/>
    <property type="match status" value="1"/>
</dbReference>
<dbReference type="NCBIfam" id="NF004019">
    <property type="entry name" value="PRK05481.1"/>
    <property type="match status" value="1"/>
</dbReference>
<dbReference type="NCBIfam" id="NF009544">
    <property type="entry name" value="PRK12928.1"/>
    <property type="match status" value="1"/>
</dbReference>
<dbReference type="PANTHER" id="PTHR10949">
    <property type="entry name" value="LIPOYL SYNTHASE"/>
    <property type="match status" value="1"/>
</dbReference>
<dbReference type="PANTHER" id="PTHR10949:SF0">
    <property type="entry name" value="LIPOYL SYNTHASE, MITOCHONDRIAL"/>
    <property type="match status" value="1"/>
</dbReference>
<dbReference type="Pfam" id="PF16881">
    <property type="entry name" value="LIAS_N"/>
    <property type="match status" value="1"/>
</dbReference>
<dbReference type="Pfam" id="PF04055">
    <property type="entry name" value="Radical_SAM"/>
    <property type="match status" value="1"/>
</dbReference>
<dbReference type="PIRSF" id="PIRSF005963">
    <property type="entry name" value="Lipoyl_synth"/>
    <property type="match status" value="1"/>
</dbReference>
<dbReference type="SFLD" id="SFLDF00271">
    <property type="entry name" value="lipoyl_synthase"/>
    <property type="match status" value="1"/>
</dbReference>
<dbReference type="SFLD" id="SFLDG01058">
    <property type="entry name" value="lipoyl_synthase_like"/>
    <property type="match status" value="1"/>
</dbReference>
<dbReference type="SMART" id="SM00729">
    <property type="entry name" value="Elp3"/>
    <property type="match status" value="1"/>
</dbReference>
<dbReference type="SUPFAM" id="SSF102114">
    <property type="entry name" value="Radical SAM enzymes"/>
    <property type="match status" value="1"/>
</dbReference>
<dbReference type="PROSITE" id="PS51918">
    <property type="entry name" value="RADICAL_SAM"/>
    <property type="match status" value="1"/>
</dbReference>
<evidence type="ECO:0000255" key="1">
    <source>
        <dbReference type="HAMAP-Rule" id="MF_00206"/>
    </source>
</evidence>
<evidence type="ECO:0000255" key="2">
    <source>
        <dbReference type="PROSITE-ProRule" id="PRU01266"/>
    </source>
</evidence>
<evidence type="ECO:0000305" key="3"/>
<name>LIPA_GEOKA</name>